<dbReference type="EC" id="4.1.1.11" evidence="1"/>
<dbReference type="EMBL" id="CP000813">
    <property type="protein sequence ID" value="ABV62642.1"/>
    <property type="molecule type" value="Genomic_DNA"/>
</dbReference>
<dbReference type="RefSeq" id="WP_012010356.1">
    <property type="nucleotide sequence ID" value="NC_009848.4"/>
</dbReference>
<dbReference type="SMR" id="A8FEH5"/>
<dbReference type="STRING" id="315750.BPUM_1972"/>
<dbReference type="GeneID" id="5621237"/>
<dbReference type="KEGG" id="bpu:BPUM_1972"/>
<dbReference type="eggNOG" id="COG0853">
    <property type="taxonomic scope" value="Bacteria"/>
</dbReference>
<dbReference type="HOGENOM" id="CLU_115305_2_0_9"/>
<dbReference type="OrthoDB" id="9803983at2"/>
<dbReference type="UniPathway" id="UPA00028">
    <property type="reaction ID" value="UER00002"/>
</dbReference>
<dbReference type="Proteomes" id="UP000001355">
    <property type="component" value="Chromosome"/>
</dbReference>
<dbReference type="GO" id="GO:0005829">
    <property type="term" value="C:cytosol"/>
    <property type="evidence" value="ECO:0007669"/>
    <property type="project" value="TreeGrafter"/>
</dbReference>
<dbReference type="GO" id="GO:0004068">
    <property type="term" value="F:aspartate 1-decarboxylase activity"/>
    <property type="evidence" value="ECO:0007669"/>
    <property type="project" value="UniProtKB-UniRule"/>
</dbReference>
<dbReference type="GO" id="GO:0006523">
    <property type="term" value="P:alanine biosynthetic process"/>
    <property type="evidence" value="ECO:0007669"/>
    <property type="project" value="InterPro"/>
</dbReference>
<dbReference type="GO" id="GO:0015940">
    <property type="term" value="P:pantothenate biosynthetic process"/>
    <property type="evidence" value="ECO:0007669"/>
    <property type="project" value="UniProtKB-UniRule"/>
</dbReference>
<dbReference type="CDD" id="cd06919">
    <property type="entry name" value="Asp_decarbox"/>
    <property type="match status" value="1"/>
</dbReference>
<dbReference type="Gene3D" id="2.40.40.20">
    <property type="match status" value="1"/>
</dbReference>
<dbReference type="HAMAP" id="MF_00446">
    <property type="entry name" value="PanD"/>
    <property type="match status" value="1"/>
</dbReference>
<dbReference type="InterPro" id="IPR009010">
    <property type="entry name" value="Asp_de-COase-like_dom_sf"/>
</dbReference>
<dbReference type="InterPro" id="IPR003190">
    <property type="entry name" value="Asp_decarbox"/>
</dbReference>
<dbReference type="NCBIfam" id="TIGR00223">
    <property type="entry name" value="panD"/>
    <property type="match status" value="1"/>
</dbReference>
<dbReference type="PANTHER" id="PTHR21012">
    <property type="entry name" value="ASPARTATE 1-DECARBOXYLASE"/>
    <property type="match status" value="1"/>
</dbReference>
<dbReference type="PANTHER" id="PTHR21012:SF0">
    <property type="entry name" value="ASPARTATE 1-DECARBOXYLASE"/>
    <property type="match status" value="1"/>
</dbReference>
<dbReference type="Pfam" id="PF02261">
    <property type="entry name" value="Asp_decarbox"/>
    <property type="match status" value="1"/>
</dbReference>
<dbReference type="PIRSF" id="PIRSF006246">
    <property type="entry name" value="Asp_decarbox"/>
    <property type="match status" value="1"/>
</dbReference>
<dbReference type="SUPFAM" id="SSF50692">
    <property type="entry name" value="ADC-like"/>
    <property type="match status" value="1"/>
</dbReference>
<evidence type="ECO:0000255" key="1">
    <source>
        <dbReference type="HAMAP-Rule" id="MF_00446"/>
    </source>
</evidence>
<sequence length="127" mass="13920">MYRTFMTSKLHKATVTEANLHYVGSITIDEDLLDAAGMMANEKVQIVNNHNGARLETYIIPGERKSGVICLNGAAARLVQPGDEVIIIAYGMLSEGEAKTHTPKVVVLNKENQIEQMIGQEPARTIL</sequence>
<keyword id="KW-0068">Autocatalytic cleavage</keyword>
<keyword id="KW-0963">Cytoplasm</keyword>
<keyword id="KW-0210">Decarboxylase</keyword>
<keyword id="KW-0456">Lyase</keyword>
<keyword id="KW-0566">Pantothenate biosynthesis</keyword>
<keyword id="KW-0670">Pyruvate</keyword>
<keyword id="KW-0704">Schiff base</keyword>
<keyword id="KW-0865">Zymogen</keyword>
<comment type="function">
    <text evidence="1">Catalyzes the pyruvoyl-dependent decarboxylation of aspartate to produce beta-alanine.</text>
</comment>
<comment type="catalytic activity">
    <reaction evidence="1">
        <text>L-aspartate + H(+) = beta-alanine + CO2</text>
        <dbReference type="Rhea" id="RHEA:19497"/>
        <dbReference type="ChEBI" id="CHEBI:15378"/>
        <dbReference type="ChEBI" id="CHEBI:16526"/>
        <dbReference type="ChEBI" id="CHEBI:29991"/>
        <dbReference type="ChEBI" id="CHEBI:57966"/>
        <dbReference type="EC" id="4.1.1.11"/>
    </reaction>
</comment>
<comment type="cofactor">
    <cofactor evidence="1">
        <name>pyruvate</name>
        <dbReference type="ChEBI" id="CHEBI:15361"/>
    </cofactor>
    <text evidence="1">Binds 1 pyruvoyl group covalently per subunit.</text>
</comment>
<comment type="pathway">
    <text evidence="1">Cofactor biosynthesis; (R)-pantothenate biosynthesis; beta-alanine from L-aspartate: step 1/1.</text>
</comment>
<comment type="subunit">
    <text evidence="1">Heterooctamer of four alpha and four beta subunits.</text>
</comment>
<comment type="subcellular location">
    <subcellularLocation>
        <location evidence="1">Cytoplasm</location>
    </subcellularLocation>
</comment>
<comment type="PTM">
    <text evidence="1">Is synthesized initially as an inactive proenzyme, which is activated by self-cleavage at a specific serine bond to produce a beta-subunit with a hydroxyl group at its C-terminus and an alpha-subunit with a pyruvoyl group at its N-terminus.</text>
</comment>
<comment type="similarity">
    <text evidence="1">Belongs to the PanD family.</text>
</comment>
<accession>A8FEH5</accession>
<reference key="1">
    <citation type="journal article" date="2007" name="PLoS ONE">
        <title>Paradoxical DNA repair and peroxide resistance gene conservation in Bacillus pumilus SAFR-032.</title>
        <authorList>
            <person name="Gioia J."/>
            <person name="Yerrapragada S."/>
            <person name="Qin X."/>
            <person name="Jiang H."/>
            <person name="Igboeli O.C."/>
            <person name="Muzny D."/>
            <person name="Dugan-Rocha S."/>
            <person name="Ding Y."/>
            <person name="Hawes A."/>
            <person name="Liu W."/>
            <person name="Perez L."/>
            <person name="Kovar C."/>
            <person name="Dinh H."/>
            <person name="Lee S."/>
            <person name="Nazareth L."/>
            <person name="Blyth P."/>
            <person name="Holder M."/>
            <person name="Buhay C."/>
            <person name="Tirumalai M.R."/>
            <person name="Liu Y."/>
            <person name="Dasgupta I."/>
            <person name="Bokhetache L."/>
            <person name="Fujita M."/>
            <person name="Karouia F."/>
            <person name="Eswara Moorthy P."/>
            <person name="Siefert J."/>
            <person name="Uzman A."/>
            <person name="Buzumbo P."/>
            <person name="Verma A."/>
            <person name="Zwiya H."/>
            <person name="McWilliams B.D."/>
            <person name="Olowu A."/>
            <person name="Clinkenbeard K.D."/>
            <person name="Newcombe D."/>
            <person name="Golebiewski L."/>
            <person name="Petrosino J.F."/>
            <person name="Nicholson W.L."/>
            <person name="Fox G.E."/>
            <person name="Venkateswaran K."/>
            <person name="Highlander S.K."/>
            <person name="Weinstock G.M."/>
        </authorList>
    </citation>
    <scope>NUCLEOTIDE SEQUENCE [LARGE SCALE GENOMIC DNA]</scope>
    <source>
        <strain>SAFR-032</strain>
    </source>
</reference>
<gene>
    <name evidence="1" type="primary">panD</name>
    <name type="ordered locus">BPUM_1972</name>
</gene>
<protein>
    <recommendedName>
        <fullName evidence="1">Aspartate 1-decarboxylase</fullName>
        <ecNumber evidence="1">4.1.1.11</ecNumber>
    </recommendedName>
    <alternativeName>
        <fullName evidence="1">Aspartate alpha-decarboxylase</fullName>
    </alternativeName>
    <component>
        <recommendedName>
            <fullName evidence="1">Aspartate 1-decarboxylase beta chain</fullName>
        </recommendedName>
    </component>
    <component>
        <recommendedName>
            <fullName evidence="1">Aspartate 1-decarboxylase alpha chain</fullName>
        </recommendedName>
    </component>
</protein>
<name>PAND_BACP2</name>
<organism>
    <name type="scientific">Bacillus pumilus (strain SAFR-032)</name>
    <dbReference type="NCBI Taxonomy" id="315750"/>
    <lineage>
        <taxon>Bacteria</taxon>
        <taxon>Bacillati</taxon>
        <taxon>Bacillota</taxon>
        <taxon>Bacilli</taxon>
        <taxon>Bacillales</taxon>
        <taxon>Bacillaceae</taxon>
        <taxon>Bacillus</taxon>
    </lineage>
</organism>
<proteinExistence type="inferred from homology"/>
<feature type="chain" id="PRO_1000060266" description="Aspartate 1-decarboxylase beta chain" evidence="1">
    <location>
        <begin position="1"/>
        <end position="24"/>
    </location>
</feature>
<feature type="chain" id="PRO_1000060267" description="Aspartate 1-decarboxylase alpha chain" evidence="1">
    <location>
        <begin position="25"/>
        <end position="127"/>
    </location>
</feature>
<feature type="active site" description="Schiff-base intermediate with substrate; via pyruvic acid" evidence="1">
    <location>
        <position position="25"/>
    </location>
</feature>
<feature type="active site" description="Proton donor" evidence="1">
    <location>
        <position position="58"/>
    </location>
</feature>
<feature type="binding site" evidence="1">
    <location>
        <position position="57"/>
    </location>
    <ligand>
        <name>substrate</name>
    </ligand>
</feature>
<feature type="binding site" evidence="1">
    <location>
        <begin position="73"/>
        <end position="75"/>
    </location>
    <ligand>
        <name>substrate</name>
    </ligand>
</feature>
<feature type="modified residue" description="Pyruvic acid (Ser)" evidence="1">
    <location>
        <position position="25"/>
    </location>
</feature>